<dbReference type="EMBL" id="BA000028">
    <property type="protein sequence ID" value="BAC15369.1"/>
    <property type="molecule type" value="Genomic_DNA"/>
</dbReference>
<dbReference type="RefSeq" id="WP_011067811.1">
    <property type="nucleotide sequence ID" value="NC_004193.1"/>
</dbReference>
<dbReference type="SMR" id="Q8EL19"/>
<dbReference type="STRING" id="221109.gene:10735665"/>
<dbReference type="KEGG" id="oih:OB3413"/>
<dbReference type="eggNOG" id="COG4821">
    <property type="taxonomic scope" value="Bacteria"/>
</dbReference>
<dbReference type="HOGENOM" id="CLU_089975_0_0_9"/>
<dbReference type="OrthoDB" id="9805185at2"/>
<dbReference type="PhylomeDB" id="Q8EL19"/>
<dbReference type="Proteomes" id="UP000000822">
    <property type="component" value="Chromosome"/>
</dbReference>
<dbReference type="GO" id="GO:0097367">
    <property type="term" value="F:carbohydrate derivative binding"/>
    <property type="evidence" value="ECO:0007669"/>
    <property type="project" value="InterPro"/>
</dbReference>
<dbReference type="GO" id="GO:1901135">
    <property type="term" value="P:carbohydrate derivative metabolic process"/>
    <property type="evidence" value="ECO:0007669"/>
    <property type="project" value="InterPro"/>
</dbReference>
<dbReference type="CDD" id="cd05013">
    <property type="entry name" value="SIS_RpiR"/>
    <property type="match status" value="1"/>
</dbReference>
<dbReference type="Gene3D" id="3.40.50.10490">
    <property type="entry name" value="Glucose-6-phosphate isomerase like protein, domain 1"/>
    <property type="match status" value="1"/>
</dbReference>
<dbReference type="HAMAP" id="MF_01240">
    <property type="entry name" value="UPF0309"/>
    <property type="match status" value="1"/>
</dbReference>
<dbReference type="InterPro" id="IPR035472">
    <property type="entry name" value="RpiR-like_SIS"/>
</dbReference>
<dbReference type="InterPro" id="IPR001347">
    <property type="entry name" value="SIS_dom"/>
</dbReference>
<dbReference type="InterPro" id="IPR046348">
    <property type="entry name" value="SIS_dom_sf"/>
</dbReference>
<dbReference type="InterPro" id="IPR050099">
    <property type="entry name" value="SIS_GmhA/DiaA_subfam"/>
</dbReference>
<dbReference type="InterPro" id="IPR022951">
    <property type="entry name" value="UPF0309"/>
</dbReference>
<dbReference type="NCBIfam" id="NF002805">
    <property type="entry name" value="PRK02947.1"/>
    <property type="match status" value="1"/>
</dbReference>
<dbReference type="PANTHER" id="PTHR30390:SF7">
    <property type="entry name" value="PHOSPHOHEPTOSE ISOMERASE"/>
    <property type="match status" value="1"/>
</dbReference>
<dbReference type="PANTHER" id="PTHR30390">
    <property type="entry name" value="SEDOHEPTULOSE 7-PHOSPHATE ISOMERASE / DNAA INITIATOR-ASSOCIATING FACTOR FOR REPLICATION INITIATION"/>
    <property type="match status" value="1"/>
</dbReference>
<dbReference type="Pfam" id="PF13580">
    <property type="entry name" value="SIS_2"/>
    <property type="match status" value="1"/>
</dbReference>
<dbReference type="SUPFAM" id="SSF53697">
    <property type="entry name" value="SIS domain"/>
    <property type="match status" value="1"/>
</dbReference>
<dbReference type="PROSITE" id="PS51464">
    <property type="entry name" value="SIS"/>
    <property type="match status" value="1"/>
</dbReference>
<accession>Q8EL19</accession>
<sequence length="246" mass="27020">MTYMKEYYTKIIEALNTISEKEDKEIASAAKSMATAVMNGNSIYLFGASHAGIIAEDAFYRAGGFALFNPIFSPSLMLNVEPVTQTSKLERLEGYGDILLDSKPVKKGDILFIHSVSGRNAVAIDMALTAKERGMGVICLTNLEYSKQVTSRHSSGYRLFELSDTVIDNGGEPGDAVVSIDLLTQKVAPISTIVGSYTIHSIVLKMIEIFEEAGTDIPIFRSANIDGGDDYNSQLFEKYKDQIHYM</sequence>
<name>Y3413_OCEIH</name>
<reference key="1">
    <citation type="journal article" date="2002" name="Nucleic Acids Res.">
        <title>Genome sequence of Oceanobacillus iheyensis isolated from the Iheya Ridge and its unexpected adaptive capabilities to extreme environments.</title>
        <authorList>
            <person name="Takami H."/>
            <person name="Takaki Y."/>
            <person name="Uchiyama I."/>
        </authorList>
    </citation>
    <scope>NUCLEOTIDE SEQUENCE [LARGE SCALE GENOMIC DNA]</scope>
    <source>
        <strain>DSM 14371 / CIP 107618 / JCM 11309 / KCTC 3954 / HTE831</strain>
    </source>
</reference>
<evidence type="ECO:0000255" key="1">
    <source>
        <dbReference type="HAMAP-Rule" id="MF_01240"/>
    </source>
</evidence>
<keyword id="KW-1185">Reference proteome</keyword>
<feature type="chain" id="PRO_0000068184" description="UPF0309 protein OB3413">
    <location>
        <begin position="1"/>
        <end position="246"/>
    </location>
</feature>
<feature type="domain" description="SIS" evidence="1">
    <location>
        <begin position="33"/>
        <end position="212"/>
    </location>
</feature>
<proteinExistence type="inferred from homology"/>
<comment type="similarity">
    <text evidence="1">Belongs to the UPF0309 family.</text>
</comment>
<gene>
    <name type="ordered locus">OB3413</name>
</gene>
<protein>
    <recommendedName>
        <fullName evidence="1">UPF0309 protein OB3413</fullName>
    </recommendedName>
</protein>
<organism>
    <name type="scientific">Oceanobacillus iheyensis (strain DSM 14371 / CIP 107618 / JCM 11309 / KCTC 3954 / HTE831)</name>
    <dbReference type="NCBI Taxonomy" id="221109"/>
    <lineage>
        <taxon>Bacteria</taxon>
        <taxon>Bacillati</taxon>
        <taxon>Bacillota</taxon>
        <taxon>Bacilli</taxon>
        <taxon>Bacillales</taxon>
        <taxon>Bacillaceae</taxon>
        <taxon>Oceanobacillus</taxon>
    </lineage>
</organism>